<name>GPI10_TRYB2</name>
<keyword id="KW-0256">Endoplasmic reticulum</keyword>
<keyword id="KW-0325">Glycoprotein</keyword>
<keyword id="KW-0328">Glycosyltransferase</keyword>
<keyword id="KW-0337">GPI-anchor biosynthesis</keyword>
<keyword id="KW-0472">Membrane</keyword>
<keyword id="KW-1185">Reference proteome</keyword>
<keyword id="KW-0808">Transferase</keyword>
<keyword id="KW-0812">Transmembrane</keyword>
<keyword id="KW-1133">Transmembrane helix</keyword>
<accession>P86936</accession>
<accession>Q38B48</accession>
<accession>Q9NKZ7</accession>
<protein>
    <recommendedName>
        <fullName>GPI mannosyltransferase 3</fullName>
        <ecNumber>2.4.1.-</ecNumber>
    </recommendedName>
    <alternativeName>
        <fullName>GPI mannosyltransferase III</fullName>
        <shortName>GPI-MT-III</shortName>
    </alternativeName>
    <alternativeName>
        <fullName>Glycosylphosphatidylinositol-anchor biosynthesis protein 10</fullName>
    </alternativeName>
</protein>
<organism>
    <name type="scientific">Trypanosoma brucei brucei (strain 927/4 GUTat10.1)</name>
    <dbReference type="NCBI Taxonomy" id="185431"/>
    <lineage>
        <taxon>Eukaryota</taxon>
        <taxon>Discoba</taxon>
        <taxon>Euglenozoa</taxon>
        <taxon>Kinetoplastea</taxon>
        <taxon>Metakinetoplastina</taxon>
        <taxon>Trypanosomatida</taxon>
        <taxon>Trypanosomatidae</taxon>
        <taxon>Trypanosoma</taxon>
    </lineage>
</organism>
<sequence length="558" mass="64398">MPWWLISLTFIYRLFLCATIRTVEAPDEWWQSTEVAYNMVFGKGHLPWEWRYGLRSVFFPAVVALPFYLLKLLGRDTTWAVWFAPRVLQALVLTLIDVSVFRMGATLDELLAKRELELAEEMRQSKTKGFSYFREVFVSRSRRGICNSISYTALLLSLSNWYMAYCGVRLYGNVIEALLVLLTLQQRRYVPFLLLTGLASAIRVTSAVVLSPLVFRHLANATREHGFTRGLFRIVLTGLIVLVAVLGGVMVLDYCFYGRWVLTPLAFFRFNVLHNLSRFFGEHPWYFYVGPVLVGIVGPHVLFTIAAPLVLWRDTASRAVSRPVLGMLGIGAWTLGFYSLIDHKEMRFVFVVIPLSLITAAFVLVRWSRTSAVVVKMNRLFVLFNIVMIYLMGYVYRRGPLDVMAEVRDGPRINRLDVIATCYTVPGYSYMHRKVNHLGFVDCSIDLDEKTGLPKVTEDIMFRRYPKEYVLWRYDGKHSFNMGDLEESRKASELQSVVMPKSAPHPDAMVMTRAVAKEIEEPFLKRHGYRLYRTFLHSPLTLAPYEDIYIQMWVKVTK</sequence>
<reference key="1">
    <citation type="journal article" date="2005" name="Science">
        <title>The genome of the African trypanosome Trypanosoma brucei.</title>
        <authorList>
            <person name="Berriman M."/>
            <person name="Ghedin E."/>
            <person name="Hertz-Fowler C."/>
            <person name="Blandin G."/>
            <person name="Renauld H."/>
            <person name="Bartholomeu D.C."/>
            <person name="Lennard N.J."/>
            <person name="Caler E."/>
            <person name="Hamlin N.E."/>
            <person name="Haas B."/>
            <person name="Bohme U."/>
            <person name="Hannick L."/>
            <person name="Aslett M.A."/>
            <person name="Shallom J."/>
            <person name="Marcello L."/>
            <person name="Hou L."/>
            <person name="Wickstead B."/>
            <person name="Alsmark U.C.M."/>
            <person name="Arrowsmith C."/>
            <person name="Atkin R.J."/>
            <person name="Barron A.J."/>
            <person name="Bringaud F."/>
            <person name="Brooks K."/>
            <person name="Carrington M."/>
            <person name="Cherevach I."/>
            <person name="Chillingworth T.J."/>
            <person name="Churcher C."/>
            <person name="Clark L.N."/>
            <person name="Corton C.H."/>
            <person name="Cronin A."/>
            <person name="Davies R.M."/>
            <person name="Doggett J."/>
            <person name="Djikeng A."/>
            <person name="Feldblyum T."/>
            <person name="Field M.C."/>
            <person name="Fraser A."/>
            <person name="Goodhead I."/>
            <person name="Hance Z."/>
            <person name="Harper D."/>
            <person name="Harris B.R."/>
            <person name="Hauser H."/>
            <person name="Hostetler J."/>
            <person name="Ivens A."/>
            <person name="Jagels K."/>
            <person name="Johnson D."/>
            <person name="Johnson J."/>
            <person name="Jones K."/>
            <person name="Kerhornou A.X."/>
            <person name="Koo H."/>
            <person name="Larke N."/>
            <person name="Landfear S."/>
            <person name="Larkin C."/>
            <person name="Leech V."/>
            <person name="Line A."/>
            <person name="Lord A."/>
            <person name="Macleod A."/>
            <person name="Mooney P.J."/>
            <person name="Moule S."/>
            <person name="Martin D.M."/>
            <person name="Morgan G.W."/>
            <person name="Mungall K."/>
            <person name="Norbertczak H."/>
            <person name="Ormond D."/>
            <person name="Pai G."/>
            <person name="Peacock C.S."/>
            <person name="Peterson J."/>
            <person name="Quail M.A."/>
            <person name="Rabbinowitsch E."/>
            <person name="Rajandream M.A."/>
            <person name="Reitter C."/>
            <person name="Salzberg S.L."/>
            <person name="Sanders M."/>
            <person name="Schobel S."/>
            <person name="Sharp S."/>
            <person name="Simmonds M."/>
            <person name="Simpson A.J."/>
            <person name="Tallon L."/>
            <person name="Turner C.M."/>
            <person name="Tait A."/>
            <person name="Tivey A.R."/>
            <person name="Van Aken S."/>
            <person name="Walker D."/>
            <person name="Wanless D."/>
            <person name="Wang S."/>
            <person name="White B."/>
            <person name="White O."/>
            <person name="Whitehead S."/>
            <person name="Woodward J."/>
            <person name="Wortman J."/>
            <person name="Adams M.D."/>
            <person name="Embley T.M."/>
            <person name="Gull K."/>
            <person name="Ullu E."/>
            <person name="Barry J.D."/>
            <person name="Fairlamb A.H."/>
            <person name="Opperdoes F."/>
            <person name="Barrell B.G."/>
            <person name="Donelson J.E."/>
            <person name="Hall N."/>
            <person name="Fraser C.M."/>
            <person name="Melville S.E."/>
            <person name="El-Sayed N.M.A."/>
        </authorList>
    </citation>
    <scope>NUCLEOTIDE SEQUENCE [LARGE SCALE GENOMIC DNA]</scope>
    <source>
        <strain evidence="4">927/4 GUTat10.1</strain>
    </source>
</reference>
<proteinExistence type="inferred from homology"/>
<evidence type="ECO:0000250" key="1"/>
<evidence type="ECO:0000255" key="2"/>
<evidence type="ECO:0000305" key="3"/>
<evidence type="ECO:0000312" key="4">
    <source>
        <dbReference type="Proteomes" id="UP000008524"/>
    </source>
</evidence>
<gene>
    <name type="primary">GPI10</name>
    <name type="ORF">Tb10.70.1440</name>
</gene>
<dbReference type="EC" id="2.4.1.-"/>
<dbReference type="EMBL" id="CM000208">
    <property type="protein sequence ID" value="EAN77972.1"/>
    <property type="molecule type" value="Genomic_DNA"/>
</dbReference>
<dbReference type="RefSeq" id="XP_822800.1">
    <property type="nucleotide sequence ID" value="XM_817707.1"/>
</dbReference>
<dbReference type="FunCoup" id="P86936">
    <property type="interactions" value="334"/>
</dbReference>
<dbReference type="STRING" id="185431.P86936"/>
<dbReference type="GlyCosmos" id="P86936">
    <property type="glycosylation" value="2 sites, No reported glycans"/>
</dbReference>
<dbReference type="PaxDb" id="5691-EAN77972"/>
<dbReference type="GeneID" id="3662460"/>
<dbReference type="KEGG" id="tbr:Tb10.70.1440"/>
<dbReference type="eggNOG" id="KOG1771">
    <property type="taxonomic scope" value="Eukaryota"/>
</dbReference>
<dbReference type="InParanoid" id="P86936"/>
<dbReference type="OMA" id="HEWPDYL"/>
<dbReference type="OrthoDB" id="416834at2759"/>
<dbReference type="UniPathway" id="UPA00196"/>
<dbReference type="Proteomes" id="UP000008524">
    <property type="component" value="Chromosome 10"/>
</dbReference>
<dbReference type="GO" id="GO:0005789">
    <property type="term" value="C:endoplasmic reticulum membrane"/>
    <property type="evidence" value="ECO:0000318"/>
    <property type="project" value="GO_Central"/>
</dbReference>
<dbReference type="GO" id="GO:0000026">
    <property type="term" value="F:alpha-1,2-mannosyltransferase activity"/>
    <property type="evidence" value="ECO:0000318"/>
    <property type="project" value="GO_Central"/>
</dbReference>
<dbReference type="GO" id="GO:0000030">
    <property type="term" value="F:mannosyltransferase activity"/>
    <property type="evidence" value="ECO:0000304"/>
    <property type="project" value="GeneDB"/>
</dbReference>
<dbReference type="GO" id="GO:0006506">
    <property type="term" value="P:GPI anchor biosynthetic process"/>
    <property type="evidence" value="ECO:0000318"/>
    <property type="project" value="GO_Central"/>
</dbReference>
<dbReference type="InterPro" id="IPR005599">
    <property type="entry name" value="GPI_mannosylTrfase"/>
</dbReference>
<dbReference type="PANTHER" id="PTHR22760">
    <property type="entry name" value="GLYCOSYLTRANSFERASE"/>
    <property type="match status" value="1"/>
</dbReference>
<dbReference type="PANTHER" id="PTHR22760:SF4">
    <property type="entry name" value="GPI MANNOSYLTRANSFERASE 3"/>
    <property type="match status" value="1"/>
</dbReference>
<dbReference type="Pfam" id="PF03901">
    <property type="entry name" value="Glyco_transf_22"/>
    <property type="match status" value="1"/>
</dbReference>
<feature type="chain" id="PRO_0000412122" description="GPI mannosyltransferase 3">
    <location>
        <begin position="1"/>
        <end position="558"/>
    </location>
</feature>
<feature type="transmembrane region" description="Helical" evidence="2">
    <location>
        <begin position="53"/>
        <end position="73"/>
    </location>
</feature>
<feature type="transmembrane region" description="Helical" evidence="2">
    <location>
        <begin position="81"/>
        <end position="101"/>
    </location>
</feature>
<feature type="transmembrane region" description="Helical" evidence="2">
    <location>
        <begin position="164"/>
        <end position="184"/>
    </location>
</feature>
<feature type="transmembrane region" description="Helical" evidence="2">
    <location>
        <begin position="190"/>
        <end position="210"/>
    </location>
</feature>
<feature type="transmembrane region" description="Helical" evidence="2">
    <location>
        <begin position="234"/>
        <end position="254"/>
    </location>
</feature>
<feature type="transmembrane region" description="Helical" evidence="2">
    <location>
        <begin position="292"/>
        <end position="312"/>
    </location>
</feature>
<feature type="transmembrane region" description="Helical" evidence="2">
    <location>
        <begin position="323"/>
        <end position="343"/>
    </location>
</feature>
<feature type="transmembrane region" description="Helical" evidence="2">
    <location>
        <begin position="348"/>
        <end position="368"/>
    </location>
</feature>
<feature type="transmembrane region" description="Helical" evidence="2">
    <location>
        <begin position="372"/>
        <end position="392"/>
    </location>
</feature>
<feature type="glycosylation site" description="N-linked (GlcNAc...) asparagine" evidence="2">
    <location>
        <position position="220"/>
    </location>
</feature>
<feature type="glycosylation site" description="N-linked (GlcNAc...) asparagine" evidence="2">
    <location>
        <position position="275"/>
    </location>
</feature>
<comment type="function">
    <text evidence="1">Mannosyltransferase involved in glycosylphosphatidylinositol-anchor biosynthesis. Transfers the third alpha-1,2-mannose to Man2-GlcN-acyl-PI during GPI precursor assembly (By similarity).</text>
</comment>
<comment type="pathway">
    <text>Glycolipid biosynthesis; glycosylphosphatidylinositol-anchor biosynthesis.</text>
</comment>
<comment type="subcellular location">
    <subcellularLocation>
        <location evidence="1">Endoplasmic reticulum membrane</location>
        <topology evidence="1">Multi-pass membrane protein</topology>
    </subcellularLocation>
</comment>
<comment type="miscellaneous">
    <text evidence="1">The protozoan parasite evades the immune response of mammalian hosts and digestion in the gut of the insect vector by means of its coat proteins tethered to the cell surface via GPI-anchors. GPI10 is essential for growth of mammalian stage bloodstream form, while procyclic form (insect stage parasites) are viable but grow slower, suggesting that inhibition of GPI synthesis may be an effective chemotherapy against African trypanosomiasis (By similarity).</text>
</comment>
<comment type="similarity">
    <text evidence="3">Belongs to the glycosyltransferase 22 family. PIGB subfamily.</text>
</comment>